<comment type="function">
    <text evidence="1">The RuvA-RuvB-RuvC complex processes Holliday junction (HJ) DNA during genetic recombination and DNA repair, while the RuvA-RuvB complex plays an important role in the rescue of blocked DNA replication forks via replication fork reversal (RFR). RuvA specifically binds to HJ cruciform DNA, conferring on it an open structure. The RuvB hexamer acts as an ATP-dependent pump, pulling dsDNA into and through the RuvAB complex. RuvB forms 2 homohexamers on either side of HJ DNA bound by 1 or 2 RuvA tetramers; 4 subunits per hexamer contact DNA at a time. Coordinated motions by a converter formed by DNA-disengaged RuvB subunits stimulates ATP hydrolysis and nucleotide exchange. Immobilization of the converter enables RuvB to convert the ATP-contained energy into a lever motion, pulling 2 nucleotides of DNA out of the RuvA tetramer per ATP hydrolyzed, thus driving DNA branch migration. The RuvB motors rotate together with the DNA substrate, which together with the progressing nucleotide cycle form the mechanistic basis for DNA recombination by continuous HJ branch migration. Branch migration allows RuvC to scan DNA until it finds its consensus sequence, where it cleaves and resolves cruciform DNA.</text>
</comment>
<comment type="catalytic activity">
    <reaction evidence="1">
        <text>ATP + H2O = ADP + phosphate + H(+)</text>
        <dbReference type="Rhea" id="RHEA:13065"/>
        <dbReference type="ChEBI" id="CHEBI:15377"/>
        <dbReference type="ChEBI" id="CHEBI:15378"/>
        <dbReference type="ChEBI" id="CHEBI:30616"/>
        <dbReference type="ChEBI" id="CHEBI:43474"/>
        <dbReference type="ChEBI" id="CHEBI:456216"/>
    </reaction>
</comment>
<comment type="subunit">
    <text evidence="1">Homohexamer. Forms an RuvA(8)-RuvB(12)-Holliday junction (HJ) complex. HJ DNA is sandwiched between 2 RuvA tetramers; dsDNA enters through RuvA and exits via RuvB. An RuvB hexamer assembles on each DNA strand where it exits the tetramer. Each RuvB hexamer is contacted by two RuvA subunits (via domain III) on 2 adjacent RuvB subunits; this complex drives branch migration. In the full resolvosome a probable DNA-RuvA(4)-RuvB(12)-RuvC(2) complex forms which resolves the HJ.</text>
</comment>
<comment type="subcellular location">
    <subcellularLocation>
        <location evidence="1">Cytoplasm</location>
    </subcellularLocation>
</comment>
<comment type="domain">
    <text evidence="1">Has 3 domains, the large (RuvB-L) and small ATPase (RuvB-S) domains and the C-terminal head (RuvB-H) domain. The head domain binds DNA, while the ATPase domains jointly bind ATP, ADP or are empty depending on the state of the subunit in the translocation cycle. During a single DNA translocation step the structure of each domain remains the same, but their relative positions change.</text>
</comment>
<comment type="similarity">
    <text evidence="1">Belongs to the RuvB family.</text>
</comment>
<comment type="sequence caution" evidence="3">
    <conflict type="erroneous initiation">
        <sequence resource="EMBL-CDS" id="ABM76948"/>
    </conflict>
</comment>
<proteinExistence type="inferred from homology"/>
<name>RUVB_PROM3</name>
<feature type="chain" id="PRO_0000322831" description="Holliday junction branch migration complex subunit RuvB">
    <location>
        <begin position="1"/>
        <end position="352"/>
    </location>
</feature>
<feature type="region of interest" description="Disordered" evidence="2">
    <location>
        <begin position="1"/>
        <end position="42"/>
    </location>
</feature>
<feature type="region of interest" description="Large ATPase domain (RuvB-L)" evidence="1">
    <location>
        <begin position="13"/>
        <end position="201"/>
    </location>
</feature>
<feature type="region of interest" description="Small ATPAse domain (RuvB-S)" evidence="1">
    <location>
        <begin position="202"/>
        <end position="273"/>
    </location>
</feature>
<feature type="region of interest" description="Head domain (RuvB-H)" evidence="1">
    <location>
        <begin position="276"/>
        <end position="352"/>
    </location>
</feature>
<feature type="compositionally biased region" description="Basic and acidic residues" evidence="2">
    <location>
        <begin position="33"/>
        <end position="42"/>
    </location>
</feature>
<feature type="binding site" evidence="1">
    <location>
        <position position="40"/>
    </location>
    <ligand>
        <name>ATP</name>
        <dbReference type="ChEBI" id="CHEBI:30616"/>
    </ligand>
</feature>
<feature type="binding site" evidence="1">
    <location>
        <position position="41"/>
    </location>
    <ligand>
        <name>ATP</name>
        <dbReference type="ChEBI" id="CHEBI:30616"/>
    </ligand>
</feature>
<feature type="binding site" evidence="1">
    <location>
        <position position="82"/>
    </location>
    <ligand>
        <name>ATP</name>
        <dbReference type="ChEBI" id="CHEBI:30616"/>
    </ligand>
</feature>
<feature type="binding site" evidence="1">
    <location>
        <position position="85"/>
    </location>
    <ligand>
        <name>ATP</name>
        <dbReference type="ChEBI" id="CHEBI:30616"/>
    </ligand>
</feature>
<feature type="binding site" evidence="1">
    <location>
        <position position="86"/>
    </location>
    <ligand>
        <name>ATP</name>
        <dbReference type="ChEBI" id="CHEBI:30616"/>
    </ligand>
</feature>
<feature type="binding site" evidence="1">
    <location>
        <position position="86"/>
    </location>
    <ligand>
        <name>Mg(2+)</name>
        <dbReference type="ChEBI" id="CHEBI:18420"/>
    </ligand>
</feature>
<feature type="binding site" evidence="1">
    <location>
        <position position="87"/>
    </location>
    <ligand>
        <name>ATP</name>
        <dbReference type="ChEBI" id="CHEBI:30616"/>
    </ligand>
</feature>
<feature type="binding site" evidence="1">
    <location>
        <position position="191"/>
    </location>
    <ligand>
        <name>ATP</name>
        <dbReference type="ChEBI" id="CHEBI:30616"/>
    </ligand>
</feature>
<feature type="binding site" evidence="1">
    <location>
        <position position="201"/>
    </location>
    <ligand>
        <name>ATP</name>
        <dbReference type="ChEBI" id="CHEBI:30616"/>
    </ligand>
</feature>
<feature type="binding site" evidence="1">
    <location>
        <position position="238"/>
    </location>
    <ligand>
        <name>ATP</name>
        <dbReference type="ChEBI" id="CHEBI:30616"/>
    </ligand>
</feature>
<feature type="binding site" evidence="1">
    <location>
        <position position="331"/>
    </location>
    <ligand>
        <name>DNA</name>
        <dbReference type="ChEBI" id="CHEBI:16991"/>
    </ligand>
</feature>
<feature type="binding site" evidence="1">
    <location>
        <position position="336"/>
    </location>
    <ligand>
        <name>DNA</name>
        <dbReference type="ChEBI" id="CHEBI:16991"/>
    </ligand>
</feature>
<gene>
    <name evidence="1" type="primary">ruvB</name>
    <name type="ordered locus">P9303_01931</name>
</gene>
<accession>A2C638</accession>
<organism>
    <name type="scientific">Prochlorococcus marinus (strain MIT 9303)</name>
    <dbReference type="NCBI Taxonomy" id="59922"/>
    <lineage>
        <taxon>Bacteria</taxon>
        <taxon>Bacillati</taxon>
        <taxon>Cyanobacteriota</taxon>
        <taxon>Cyanophyceae</taxon>
        <taxon>Synechococcales</taxon>
        <taxon>Prochlorococcaceae</taxon>
        <taxon>Prochlorococcus</taxon>
    </lineage>
</organism>
<evidence type="ECO:0000255" key="1">
    <source>
        <dbReference type="HAMAP-Rule" id="MF_00016"/>
    </source>
</evidence>
<evidence type="ECO:0000256" key="2">
    <source>
        <dbReference type="SAM" id="MobiDB-lite"/>
    </source>
</evidence>
<evidence type="ECO:0000305" key="3"/>
<reference key="1">
    <citation type="journal article" date="2007" name="PLoS Genet.">
        <title>Patterns and implications of gene gain and loss in the evolution of Prochlorococcus.</title>
        <authorList>
            <person name="Kettler G.C."/>
            <person name="Martiny A.C."/>
            <person name="Huang K."/>
            <person name="Zucker J."/>
            <person name="Coleman M.L."/>
            <person name="Rodrigue S."/>
            <person name="Chen F."/>
            <person name="Lapidus A."/>
            <person name="Ferriera S."/>
            <person name="Johnson J."/>
            <person name="Steglich C."/>
            <person name="Church G.M."/>
            <person name="Richardson P."/>
            <person name="Chisholm S.W."/>
        </authorList>
    </citation>
    <scope>NUCLEOTIDE SEQUENCE [LARGE SCALE GENOMIC DNA]</scope>
    <source>
        <strain>MIT 9303</strain>
    </source>
</reference>
<dbReference type="EC" id="3.6.4.-" evidence="1"/>
<dbReference type="EMBL" id="CP000554">
    <property type="protein sequence ID" value="ABM76948.1"/>
    <property type="status" value="ALT_INIT"/>
    <property type="molecule type" value="Genomic_DNA"/>
</dbReference>
<dbReference type="RefSeq" id="WP_041374658.1">
    <property type="nucleotide sequence ID" value="NC_008820.1"/>
</dbReference>
<dbReference type="SMR" id="A2C638"/>
<dbReference type="STRING" id="59922.P9303_01931"/>
<dbReference type="KEGG" id="pmf:P9303_01931"/>
<dbReference type="HOGENOM" id="CLU_055599_1_0_3"/>
<dbReference type="BioCyc" id="PMAR59922:G1G80-187-MONOMER"/>
<dbReference type="Proteomes" id="UP000002274">
    <property type="component" value="Chromosome"/>
</dbReference>
<dbReference type="GO" id="GO:0005737">
    <property type="term" value="C:cytoplasm"/>
    <property type="evidence" value="ECO:0007669"/>
    <property type="project" value="UniProtKB-SubCell"/>
</dbReference>
<dbReference type="GO" id="GO:0048476">
    <property type="term" value="C:Holliday junction resolvase complex"/>
    <property type="evidence" value="ECO:0007669"/>
    <property type="project" value="UniProtKB-UniRule"/>
</dbReference>
<dbReference type="GO" id="GO:0005524">
    <property type="term" value="F:ATP binding"/>
    <property type="evidence" value="ECO:0007669"/>
    <property type="project" value="UniProtKB-UniRule"/>
</dbReference>
<dbReference type="GO" id="GO:0016887">
    <property type="term" value="F:ATP hydrolysis activity"/>
    <property type="evidence" value="ECO:0007669"/>
    <property type="project" value="InterPro"/>
</dbReference>
<dbReference type="GO" id="GO:0000400">
    <property type="term" value="F:four-way junction DNA binding"/>
    <property type="evidence" value="ECO:0007669"/>
    <property type="project" value="UniProtKB-UniRule"/>
</dbReference>
<dbReference type="GO" id="GO:0009378">
    <property type="term" value="F:four-way junction helicase activity"/>
    <property type="evidence" value="ECO:0007669"/>
    <property type="project" value="InterPro"/>
</dbReference>
<dbReference type="GO" id="GO:0006310">
    <property type="term" value="P:DNA recombination"/>
    <property type="evidence" value="ECO:0007669"/>
    <property type="project" value="UniProtKB-UniRule"/>
</dbReference>
<dbReference type="GO" id="GO:0006281">
    <property type="term" value="P:DNA repair"/>
    <property type="evidence" value="ECO:0007669"/>
    <property type="project" value="UniProtKB-UniRule"/>
</dbReference>
<dbReference type="CDD" id="cd00009">
    <property type="entry name" value="AAA"/>
    <property type="match status" value="1"/>
</dbReference>
<dbReference type="Gene3D" id="1.10.8.60">
    <property type="match status" value="1"/>
</dbReference>
<dbReference type="Gene3D" id="3.40.50.300">
    <property type="entry name" value="P-loop containing nucleotide triphosphate hydrolases"/>
    <property type="match status" value="1"/>
</dbReference>
<dbReference type="Gene3D" id="1.10.10.10">
    <property type="entry name" value="Winged helix-like DNA-binding domain superfamily/Winged helix DNA-binding domain"/>
    <property type="match status" value="1"/>
</dbReference>
<dbReference type="HAMAP" id="MF_00016">
    <property type="entry name" value="DNA_HJ_migration_RuvB"/>
    <property type="match status" value="1"/>
</dbReference>
<dbReference type="InterPro" id="IPR003593">
    <property type="entry name" value="AAA+_ATPase"/>
</dbReference>
<dbReference type="InterPro" id="IPR041445">
    <property type="entry name" value="AAA_lid_4"/>
</dbReference>
<dbReference type="InterPro" id="IPR004605">
    <property type="entry name" value="DNA_helicase_Holl-junc_RuvB"/>
</dbReference>
<dbReference type="InterPro" id="IPR027417">
    <property type="entry name" value="P-loop_NTPase"/>
</dbReference>
<dbReference type="InterPro" id="IPR008824">
    <property type="entry name" value="RuvB-like_N"/>
</dbReference>
<dbReference type="InterPro" id="IPR008823">
    <property type="entry name" value="RuvB_C"/>
</dbReference>
<dbReference type="InterPro" id="IPR036388">
    <property type="entry name" value="WH-like_DNA-bd_sf"/>
</dbReference>
<dbReference type="InterPro" id="IPR036390">
    <property type="entry name" value="WH_DNA-bd_sf"/>
</dbReference>
<dbReference type="NCBIfam" id="NF000868">
    <property type="entry name" value="PRK00080.1"/>
    <property type="match status" value="1"/>
</dbReference>
<dbReference type="NCBIfam" id="TIGR00635">
    <property type="entry name" value="ruvB"/>
    <property type="match status" value="1"/>
</dbReference>
<dbReference type="PANTHER" id="PTHR42848">
    <property type="match status" value="1"/>
</dbReference>
<dbReference type="PANTHER" id="PTHR42848:SF1">
    <property type="entry name" value="HOLLIDAY JUNCTION BRANCH MIGRATION COMPLEX SUBUNIT RUVB"/>
    <property type="match status" value="1"/>
</dbReference>
<dbReference type="Pfam" id="PF17864">
    <property type="entry name" value="AAA_lid_4"/>
    <property type="match status" value="1"/>
</dbReference>
<dbReference type="Pfam" id="PF05491">
    <property type="entry name" value="RuvB_C"/>
    <property type="match status" value="1"/>
</dbReference>
<dbReference type="Pfam" id="PF05496">
    <property type="entry name" value="RuvB_N"/>
    <property type="match status" value="1"/>
</dbReference>
<dbReference type="SMART" id="SM00382">
    <property type="entry name" value="AAA"/>
    <property type="match status" value="1"/>
</dbReference>
<dbReference type="SUPFAM" id="SSF52540">
    <property type="entry name" value="P-loop containing nucleoside triphosphate hydrolases"/>
    <property type="match status" value="1"/>
</dbReference>
<dbReference type="SUPFAM" id="SSF46785">
    <property type="entry name" value="Winged helix' DNA-binding domain"/>
    <property type="match status" value="1"/>
</dbReference>
<keyword id="KW-0067">ATP-binding</keyword>
<keyword id="KW-0963">Cytoplasm</keyword>
<keyword id="KW-0227">DNA damage</keyword>
<keyword id="KW-0233">DNA recombination</keyword>
<keyword id="KW-0234">DNA repair</keyword>
<keyword id="KW-0238">DNA-binding</keyword>
<keyword id="KW-0378">Hydrolase</keyword>
<keyword id="KW-0547">Nucleotide-binding</keyword>
<sequence length="352" mass="38067">MAIVSSSAGRADSQPPAAKSRVVDASPLPEEASPAREDGLRPKRLEDYIGQRELKQVLGIAVKAAMGRGDALDHVLLYGPPGLGKTTMAMVLAEELGVKCRVTSAPALERPRDIVGLLVNLQPREVLFIDEIHRLTRVAEELLYPAMEDRRLDLTVGKGSTARTRALELPPFTLVGATTRAGALSSPLRDRFGLIQRLEFYGLEDLQAIVERAAGLLRLQLTAQACQEIARRCRGTPRIANRLLRRVRDVASVCGGESLIDAALVDEALTLHRVDARGLDASDRRLLDLLLESHGGGPVGLETLAAALGEDPATLEAVVEPFLLQLGFLQRTPRGRVVTGAGRRHLGWPELP</sequence>
<protein>
    <recommendedName>
        <fullName evidence="1">Holliday junction branch migration complex subunit RuvB</fullName>
        <ecNumber evidence="1">3.6.4.-</ecNumber>
    </recommendedName>
</protein>